<comment type="function">
    <text evidence="1 2">Low affinity receptor for N-formyl-methionyl peptides, which are powerful neutrophil chemotactic factors (By similarity). Binding of FMLP to the receptor causes activation of neutrophils (By similarity). This response is mediated via a G-protein that activates a phosphatidylinositol-calcium second messenger system (By similarity). Receptor for the chemokine-like protein FAM19A5, mediating FAM19A5-stimulated macrophage chemotaxis and the inhibitory effect on TNFSF11/RANKL-induced osteoclast differentiation (By similarity).</text>
</comment>
<comment type="subunit">
    <text evidence="2">Interacts with APP; the interaction takes place at the cell surface and the complex is then rapidly internalized.</text>
</comment>
<comment type="subcellular location">
    <subcellularLocation>
        <location evidence="2">Cell membrane</location>
        <topology evidence="2">Multi-pass membrane protein</topology>
    </subcellularLocation>
    <text evidence="2">Associates with APP at the cell surface and the complex is then rapidly internalized.</text>
</comment>
<comment type="similarity">
    <text evidence="4">Belongs to the G-protein coupled receptor 1 family.</text>
</comment>
<accession>P79236</accession>
<sequence length="348" mass="38686">NFSTPLNEHEEVSYESAGYTVLQILPLVVLGVTFVLGVLGNGLVIWVAGFRMTRTVTTICYLNLPLADFSFTATLPFLIVSMAMGEKWPFGWFLCKLIHIVVDINLFGSVFLIGFIALDRCICVLHPVWAQNHRTVSLAMKVIIGPWILALVLTLPVFLFLTTVTIPNGDTYCTFNFASWGGTPEERKNVAITMLTARGIIRFVIGFSMPMSIVAICYGLIAAKIHKKGMIKSSRPLRVLTAVVASFFICWFPFQLVALLSTVWLKEMLFYGKYKIINILVNPTSSLAFFNSCLNPMLYVFVGQDFRERLIRSLPTSLERALSEDSAPTNDTAAKCASPPAETELQAM</sequence>
<proteinExistence type="inferred from homology"/>
<name>FPR2_PONPY</name>
<evidence type="ECO:0000250" key="1">
    <source>
        <dbReference type="UniProtKB" id="O88536"/>
    </source>
</evidence>
<evidence type="ECO:0000250" key="2">
    <source>
        <dbReference type="UniProtKB" id="P25090"/>
    </source>
</evidence>
<evidence type="ECO:0000255" key="3"/>
<evidence type="ECO:0000255" key="4">
    <source>
        <dbReference type="PROSITE-ProRule" id="PRU00521"/>
    </source>
</evidence>
<evidence type="ECO:0000256" key="5">
    <source>
        <dbReference type="SAM" id="MobiDB-lite"/>
    </source>
</evidence>
<protein>
    <recommendedName>
        <fullName>N-formyl peptide receptor 2</fullName>
    </recommendedName>
    <alternativeName>
        <fullName>FMLP-related receptor I</fullName>
        <shortName>FMLP-R-I</shortName>
    </alternativeName>
    <alternativeName>
        <fullName>Formyl peptide receptor-like 1</fullName>
    </alternativeName>
</protein>
<gene>
    <name type="primary">FPR2</name>
    <name type="synonym">FPRL1</name>
</gene>
<organism>
    <name type="scientific">Pongo pygmaeus</name>
    <name type="common">Bornean orangutan</name>
    <dbReference type="NCBI Taxonomy" id="9600"/>
    <lineage>
        <taxon>Eukaryota</taxon>
        <taxon>Metazoa</taxon>
        <taxon>Chordata</taxon>
        <taxon>Craniata</taxon>
        <taxon>Vertebrata</taxon>
        <taxon>Euteleostomi</taxon>
        <taxon>Mammalia</taxon>
        <taxon>Eutheria</taxon>
        <taxon>Euarchontoglires</taxon>
        <taxon>Primates</taxon>
        <taxon>Haplorrhini</taxon>
        <taxon>Catarrhini</taxon>
        <taxon>Hominidae</taxon>
        <taxon>Pongo</taxon>
    </lineage>
</organism>
<reference key="1">
    <citation type="journal article" date="1996" name="Immunogenetics">
        <title>Molecular evolution of the N-formyl peptide and C5a receptors in non-human primates.</title>
        <authorList>
            <person name="Alvarez V."/>
            <person name="Coto E."/>
            <person name="Sehen F."/>
            <person name="Gouzalek-Koces S."/>
            <person name="Lopez-Larrea C."/>
        </authorList>
    </citation>
    <scope>NUCLEOTIDE SEQUENCE [GENOMIC DNA]</scope>
</reference>
<dbReference type="EMBL" id="X97744">
    <property type="protein sequence ID" value="CAA66328.1"/>
    <property type="molecule type" value="Genomic_DNA"/>
</dbReference>
<dbReference type="SMR" id="P79236"/>
<dbReference type="GlyCosmos" id="P79236">
    <property type="glycosylation" value="1 site, No reported glycans"/>
</dbReference>
<dbReference type="GO" id="GO:0005886">
    <property type="term" value="C:plasma membrane"/>
    <property type="evidence" value="ECO:0007669"/>
    <property type="project" value="UniProtKB-SubCell"/>
</dbReference>
<dbReference type="GO" id="GO:0004875">
    <property type="term" value="F:complement receptor activity"/>
    <property type="evidence" value="ECO:0007669"/>
    <property type="project" value="TreeGrafter"/>
</dbReference>
<dbReference type="GO" id="GO:0004982">
    <property type="term" value="F:N-formyl peptide receptor activity"/>
    <property type="evidence" value="ECO:0007669"/>
    <property type="project" value="TreeGrafter"/>
</dbReference>
<dbReference type="GO" id="GO:0006935">
    <property type="term" value="P:chemotaxis"/>
    <property type="evidence" value="ECO:0007669"/>
    <property type="project" value="UniProtKB-KW"/>
</dbReference>
<dbReference type="GO" id="GO:0006954">
    <property type="term" value="P:inflammatory response"/>
    <property type="evidence" value="ECO:0007669"/>
    <property type="project" value="TreeGrafter"/>
</dbReference>
<dbReference type="GO" id="GO:0007200">
    <property type="term" value="P:phospholipase C-activating G protein-coupled receptor signaling pathway"/>
    <property type="evidence" value="ECO:0007669"/>
    <property type="project" value="TreeGrafter"/>
</dbReference>
<dbReference type="GO" id="GO:0007204">
    <property type="term" value="P:positive regulation of cytosolic calcium ion concentration"/>
    <property type="evidence" value="ECO:0007669"/>
    <property type="project" value="TreeGrafter"/>
</dbReference>
<dbReference type="CDD" id="cd15117">
    <property type="entry name" value="7tmA_FPR-like"/>
    <property type="match status" value="1"/>
</dbReference>
<dbReference type="FunFam" id="1.20.1070.10:FF:000034">
    <property type="entry name" value="G-protein coupled receptor 1"/>
    <property type="match status" value="1"/>
</dbReference>
<dbReference type="Gene3D" id="1.20.1070.10">
    <property type="entry name" value="Rhodopsin 7-helix transmembrane proteins"/>
    <property type="match status" value="1"/>
</dbReference>
<dbReference type="InterPro" id="IPR000826">
    <property type="entry name" value="Formyl_rcpt-rel"/>
</dbReference>
<dbReference type="InterPro" id="IPR000276">
    <property type="entry name" value="GPCR_Rhodpsn"/>
</dbReference>
<dbReference type="InterPro" id="IPR017452">
    <property type="entry name" value="GPCR_Rhodpsn_7TM"/>
</dbReference>
<dbReference type="PANTHER" id="PTHR24225">
    <property type="entry name" value="CHEMOTACTIC RECEPTOR"/>
    <property type="match status" value="1"/>
</dbReference>
<dbReference type="PANTHER" id="PTHR24225:SF0">
    <property type="entry name" value="N-FORMYL PEPTIDE RECEPTOR 2"/>
    <property type="match status" value="1"/>
</dbReference>
<dbReference type="Pfam" id="PF00001">
    <property type="entry name" value="7tm_1"/>
    <property type="match status" value="1"/>
</dbReference>
<dbReference type="PRINTS" id="PR00526">
    <property type="entry name" value="FMETLEUPHER"/>
</dbReference>
<dbReference type="PRINTS" id="PR00237">
    <property type="entry name" value="GPCRRHODOPSN"/>
</dbReference>
<dbReference type="SUPFAM" id="SSF81321">
    <property type="entry name" value="Family A G protein-coupled receptor-like"/>
    <property type="match status" value="1"/>
</dbReference>
<dbReference type="PROSITE" id="PS00237">
    <property type="entry name" value="G_PROTEIN_RECEP_F1_1"/>
    <property type="match status" value="1"/>
</dbReference>
<dbReference type="PROSITE" id="PS50262">
    <property type="entry name" value="G_PROTEIN_RECEP_F1_2"/>
    <property type="match status" value="1"/>
</dbReference>
<keyword id="KW-1003">Cell membrane</keyword>
<keyword id="KW-0145">Chemotaxis</keyword>
<keyword id="KW-1015">Disulfide bond</keyword>
<keyword id="KW-0297">G-protein coupled receptor</keyword>
<keyword id="KW-0325">Glycoprotein</keyword>
<keyword id="KW-0472">Membrane</keyword>
<keyword id="KW-0675">Receptor</keyword>
<keyword id="KW-0807">Transducer</keyword>
<keyword id="KW-0812">Transmembrane</keyword>
<keyword id="KW-1133">Transmembrane helix</keyword>
<feature type="chain" id="PRO_0000069455" description="N-formyl peptide receptor 2">
    <location>
        <begin position="1" status="less than"/>
        <end position="348" status="greater than"/>
    </location>
</feature>
<feature type="topological domain" description="Extracellular" evidence="3">
    <location>
        <begin position="1" status="less than"/>
        <end position="24"/>
    </location>
</feature>
<feature type="transmembrane region" description="Helical; Name=1" evidence="3">
    <location>
        <begin position="25"/>
        <end position="47"/>
    </location>
</feature>
<feature type="topological domain" description="Cytoplasmic" evidence="3">
    <location>
        <begin position="48"/>
        <end position="58"/>
    </location>
</feature>
<feature type="transmembrane region" description="Helical; Name=2" evidence="3">
    <location>
        <begin position="59"/>
        <end position="80"/>
    </location>
</feature>
<feature type="topological domain" description="Extracellular" evidence="3">
    <location>
        <begin position="81"/>
        <end position="97"/>
    </location>
</feature>
<feature type="transmembrane region" description="Helical; Name=3" evidence="3">
    <location>
        <begin position="98"/>
        <end position="118"/>
    </location>
</feature>
<feature type="topological domain" description="Cytoplasmic" evidence="3">
    <location>
        <begin position="119"/>
        <end position="137"/>
    </location>
</feature>
<feature type="transmembrane region" description="Helical; Name=4" evidence="3">
    <location>
        <begin position="138"/>
        <end position="159"/>
    </location>
</feature>
<feature type="topological domain" description="Extracellular" evidence="3">
    <location>
        <begin position="160"/>
        <end position="202"/>
    </location>
</feature>
<feature type="transmembrane region" description="Helical; Name=5" evidence="3">
    <location>
        <begin position="203"/>
        <end position="223"/>
    </location>
</feature>
<feature type="topological domain" description="Cytoplasmic" evidence="3">
    <location>
        <begin position="224"/>
        <end position="239"/>
    </location>
</feature>
<feature type="transmembrane region" description="Helical; Name=6" evidence="3">
    <location>
        <begin position="240"/>
        <end position="263"/>
    </location>
</feature>
<feature type="topological domain" description="Extracellular" evidence="3">
    <location>
        <begin position="264"/>
        <end position="283"/>
    </location>
</feature>
<feature type="transmembrane region" description="Helical; Name=7" evidence="3">
    <location>
        <begin position="284"/>
        <end position="303"/>
    </location>
</feature>
<feature type="topological domain" description="Cytoplasmic" evidence="3">
    <location>
        <begin position="304"/>
        <end position="348"/>
    </location>
</feature>
<feature type="region of interest" description="Disordered" evidence="5">
    <location>
        <begin position="323"/>
        <end position="348"/>
    </location>
</feature>
<feature type="glycosylation site" description="N-linked (GlcNAc...) asparagine" evidence="3">
    <location>
        <position position="1"/>
    </location>
</feature>
<feature type="disulfide bond" evidence="4">
    <location>
        <begin position="95"/>
        <end position="173"/>
    </location>
</feature>
<feature type="non-terminal residue">
    <location>
        <position position="1"/>
    </location>
</feature>
<feature type="non-terminal residue">
    <location>
        <position position="348"/>
    </location>
</feature>